<gene>
    <name type="primary">apg-9</name>
    <name type="synonym">atg17</name>
    <name type="ORF">B2G14.070</name>
    <name type="ORF">NCU08766</name>
</gene>
<reference key="1">
    <citation type="journal article" date="2003" name="Nucleic Acids Res.">
        <title>What's in the genome of a filamentous fungus? Analysis of the Neurospora genome sequence.</title>
        <authorList>
            <person name="Mannhaupt G."/>
            <person name="Montrone C."/>
            <person name="Haase D."/>
            <person name="Mewes H.-W."/>
            <person name="Aign V."/>
            <person name="Hoheisel J.D."/>
            <person name="Fartmann B."/>
            <person name="Nyakatura G."/>
            <person name="Kempken F."/>
            <person name="Maier J."/>
            <person name="Schulte U."/>
        </authorList>
    </citation>
    <scope>NUCLEOTIDE SEQUENCE [LARGE SCALE GENOMIC DNA]</scope>
    <source>
        <strain>ATCC 24698 / 74-OR23-1A / CBS 708.71 / DSM 1257 / FGSC 987</strain>
    </source>
</reference>
<reference key="2">
    <citation type="journal article" date="2003" name="Nature">
        <title>The genome sequence of the filamentous fungus Neurospora crassa.</title>
        <authorList>
            <person name="Galagan J.E."/>
            <person name="Calvo S.E."/>
            <person name="Borkovich K.A."/>
            <person name="Selker E.U."/>
            <person name="Read N.D."/>
            <person name="Jaffe D.B."/>
            <person name="FitzHugh W."/>
            <person name="Ma L.-J."/>
            <person name="Smirnov S."/>
            <person name="Purcell S."/>
            <person name="Rehman B."/>
            <person name="Elkins T."/>
            <person name="Engels R."/>
            <person name="Wang S."/>
            <person name="Nielsen C.B."/>
            <person name="Butler J."/>
            <person name="Endrizzi M."/>
            <person name="Qui D."/>
            <person name="Ianakiev P."/>
            <person name="Bell-Pedersen D."/>
            <person name="Nelson M.A."/>
            <person name="Werner-Washburne M."/>
            <person name="Selitrennikoff C.P."/>
            <person name="Kinsey J.A."/>
            <person name="Braun E.L."/>
            <person name="Zelter A."/>
            <person name="Schulte U."/>
            <person name="Kothe G.O."/>
            <person name="Jedd G."/>
            <person name="Mewes H.-W."/>
            <person name="Staben C."/>
            <person name="Marcotte E."/>
            <person name="Greenberg D."/>
            <person name="Roy A."/>
            <person name="Foley K."/>
            <person name="Naylor J."/>
            <person name="Stange-Thomann N."/>
            <person name="Barrett R."/>
            <person name="Gnerre S."/>
            <person name="Kamal M."/>
            <person name="Kamvysselis M."/>
            <person name="Mauceli E.W."/>
            <person name="Bielke C."/>
            <person name="Rudd S."/>
            <person name="Frishman D."/>
            <person name="Krystofova S."/>
            <person name="Rasmussen C."/>
            <person name="Metzenberg R.L."/>
            <person name="Perkins D.D."/>
            <person name="Kroken S."/>
            <person name="Cogoni C."/>
            <person name="Macino G."/>
            <person name="Catcheside D.E.A."/>
            <person name="Li W."/>
            <person name="Pratt R.J."/>
            <person name="Osmani S.A."/>
            <person name="DeSouza C.P.C."/>
            <person name="Glass N.L."/>
            <person name="Orbach M.J."/>
            <person name="Berglund J.A."/>
            <person name="Voelker R."/>
            <person name="Yarden O."/>
            <person name="Plamann M."/>
            <person name="Seiler S."/>
            <person name="Dunlap J.C."/>
            <person name="Radford A."/>
            <person name="Aramayo R."/>
            <person name="Natvig D.O."/>
            <person name="Alex L.A."/>
            <person name="Mannhaupt G."/>
            <person name="Ebbole D.J."/>
            <person name="Freitag M."/>
            <person name="Paulsen I."/>
            <person name="Sachs M.S."/>
            <person name="Lander E.S."/>
            <person name="Nusbaum C."/>
            <person name="Birren B.W."/>
        </authorList>
    </citation>
    <scope>NUCLEOTIDE SEQUENCE [LARGE SCALE GENOMIC DNA]</scope>
    <source>
        <strain>ATCC 24698 / 74-OR23-1A / CBS 708.71 / DSM 1257 / FGSC 987</strain>
    </source>
</reference>
<proteinExistence type="inferred from homology"/>
<dbReference type="EMBL" id="BX284753">
    <property type="protein sequence ID" value="CAD70452.1"/>
    <property type="molecule type" value="Genomic_DNA"/>
</dbReference>
<dbReference type="EMBL" id="CM002238">
    <property type="protein sequence ID" value="EAA26879.1"/>
    <property type="molecule type" value="Genomic_DNA"/>
</dbReference>
<dbReference type="RefSeq" id="XP_956115.1">
    <property type="nucleotide sequence ID" value="XM_951022.3"/>
</dbReference>
<dbReference type="SMR" id="Q872W1"/>
<dbReference type="STRING" id="367110.Q872W1"/>
<dbReference type="PaxDb" id="5141-EFNCRP00000004659"/>
<dbReference type="EnsemblFungi" id="EAA26879">
    <property type="protein sequence ID" value="EAA26879"/>
    <property type="gene ID" value="NCU08766"/>
</dbReference>
<dbReference type="GeneID" id="3872253"/>
<dbReference type="KEGG" id="ncr:NCU08766"/>
<dbReference type="VEuPathDB" id="FungiDB:NCU08766"/>
<dbReference type="HOGENOM" id="CLU_028356_0_0_1"/>
<dbReference type="InParanoid" id="Q872W1"/>
<dbReference type="OMA" id="THVWRAN"/>
<dbReference type="OrthoDB" id="1937984at2759"/>
<dbReference type="Proteomes" id="UP000001805">
    <property type="component" value="Chromosome 3, Linkage Group III"/>
</dbReference>
<dbReference type="GO" id="GO:1990316">
    <property type="term" value="C:Atg1/ULK1 kinase complex"/>
    <property type="evidence" value="ECO:0000318"/>
    <property type="project" value="GO_Central"/>
</dbReference>
<dbReference type="GO" id="GO:0000407">
    <property type="term" value="C:phagophore assembly site"/>
    <property type="evidence" value="ECO:0000318"/>
    <property type="project" value="GO_Central"/>
</dbReference>
<dbReference type="GO" id="GO:0034045">
    <property type="term" value="C:phagophore assembly site membrane"/>
    <property type="evidence" value="ECO:0007669"/>
    <property type="project" value="UniProtKB-SubCell"/>
</dbReference>
<dbReference type="GO" id="GO:0060090">
    <property type="term" value="F:molecular adaptor activity"/>
    <property type="evidence" value="ECO:0000318"/>
    <property type="project" value="GO_Central"/>
</dbReference>
<dbReference type="GO" id="GO:0030295">
    <property type="term" value="F:protein kinase activator activity"/>
    <property type="evidence" value="ECO:0000318"/>
    <property type="project" value="GO_Central"/>
</dbReference>
<dbReference type="GO" id="GO:0000045">
    <property type="term" value="P:autophagosome assembly"/>
    <property type="evidence" value="ECO:0000318"/>
    <property type="project" value="GO_Central"/>
</dbReference>
<dbReference type="GO" id="GO:0000423">
    <property type="term" value="P:mitophagy"/>
    <property type="evidence" value="ECO:0000318"/>
    <property type="project" value="GO_Central"/>
</dbReference>
<dbReference type="GO" id="GO:0000425">
    <property type="term" value="P:pexophagy"/>
    <property type="evidence" value="ECO:0000318"/>
    <property type="project" value="GO_Central"/>
</dbReference>
<dbReference type="GO" id="GO:0034727">
    <property type="term" value="P:piecemeal microautophagy of the nucleus"/>
    <property type="evidence" value="ECO:0000318"/>
    <property type="project" value="GO_Central"/>
</dbReference>
<dbReference type="InterPro" id="IPR007240">
    <property type="entry name" value="Atg17"/>
</dbReference>
<dbReference type="InterPro" id="IPR045326">
    <property type="entry name" value="ATG17-like_dom"/>
</dbReference>
<dbReference type="PANTHER" id="PTHR28005">
    <property type="entry name" value="AUTOPHAGY-RELATED PROTEIN 17"/>
    <property type="match status" value="1"/>
</dbReference>
<dbReference type="PANTHER" id="PTHR28005:SF1">
    <property type="entry name" value="AUTOPHAGY-RELATED PROTEIN 17"/>
    <property type="match status" value="1"/>
</dbReference>
<dbReference type="Pfam" id="PF04108">
    <property type="entry name" value="ATG17_like"/>
    <property type="match status" value="1"/>
</dbReference>
<comment type="function">
    <text evidence="1">Autophagy-specific protein that functions in response to autophagy-inducing signals as a scaffold to recruit other ATG proteins to organize pre-autophagosomal structure (PAS) formation. Modulates the timing and magnitude of the autophagy response, such as the size of the sequestering vesicles. Plays particularly a role in pexophagy and nucleophagy (By similarity).</text>
</comment>
<comment type="subcellular location">
    <subcellularLocation>
        <location evidence="1">Cytoplasm</location>
    </subcellularLocation>
    <subcellularLocation>
        <location evidence="1">Preautophagosomal structure membrane</location>
        <topology evidence="1">Peripheral membrane protein</topology>
    </subcellularLocation>
</comment>
<comment type="similarity">
    <text evidence="3">Belongs to the ATG17 family.</text>
</comment>
<evidence type="ECO:0000250" key="1"/>
<evidence type="ECO:0000256" key="2">
    <source>
        <dbReference type="SAM" id="MobiDB-lite"/>
    </source>
</evidence>
<evidence type="ECO:0000305" key="3"/>
<name>ATG17_NEUCR</name>
<keyword id="KW-0072">Autophagy</keyword>
<keyword id="KW-0963">Cytoplasm</keyword>
<keyword id="KW-0472">Membrane</keyword>
<keyword id="KW-1185">Reference proteome</keyword>
<protein>
    <recommendedName>
        <fullName>Autophagy-related protein 17</fullName>
    </recommendedName>
</protein>
<accession>Q872W1</accession>
<accession>Q1K4V1</accession>
<sequence length="568" mass="62724">MASFHSHSPSPPAALSPDDAPQPRRPSRTSLHDAAAAAAPALSPESPGHELEDGADSSEFNADDVPVEVLVKHLLAAKQSLSSMTLVLRANDLATSARQMHQEFVILSAQTAFLRHGILQELHILHQLRRGMARAYDNGTRDFKHIIRTLDTADGRLEKIMQVLRKTTVENVFRQPGEEPKCLLDFVDPKIVEQVRDALKESIHELSAAKTSFDGDLLRFDTDLRTLTDAMAAAASLANPTTTTPDGYPPDQRSIPNLLSALSEGSHLMAEHLSSLTRHFDMCVTAVRTTEGGAALARRRAAEATSSDEDQAPVSISGVISAQESESGPSAFEPMDPLERQELLHVVMRDAAEVDDVVADIHNVLQQMEMDHASLHSLFSASRASHAATLTCFSMLEEVGARASSYVAAEAEFMQRWEDEKETIDENVSKMDELKKFYEGFLNAYGGLLLEVERRRAVEGKIDSIWRKAKEQVDKLVEADKREREHFRLEVGDYVPADLWGVVDRPLGRWAVVPLEDTREGSYEMEAHGEPENEGKVETAYERETEPSTPTPRKMPLNGPGSAGERPF</sequence>
<feature type="chain" id="PRO_0000124563" description="Autophagy-related protein 17">
    <location>
        <begin position="1"/>
        <end position="568"/>
    </location>
</feature>
<feature type="region of interest" description="Disordered" evidence="2">
    <location>
        <begin position="1"/>
        <end position="59"/>
    </location>
</feature>
<feature type="region of interest" description="Disordered" evidence="2">
    <location>
        <begin position="522"/>
        <end position="568"/>
    </location>
</feature>
<feature type="compositionally biased region" description="Basic and acidic residues" evidence="2">
    <location>
        <begin position="522"/>
        <end position="546"/>
    </location>
</feature>
<organism>
    <name type="scientific">Neurospora crassa (strain ATCC 24698 / 74-OR23-1A / CBS 708.71 / DSM 1257 / FGSC 987)</name>
    <dbReference type="NCBI Taxonomy" id="367110"/>
    <lineage>
        <taxon>Eukaryota</taxon>
        <taxon>Fungi</taxon>
        <taxon>Dikarya</taxon>
        <taxon>Ascomycota</taxon>
        <taxon>Pezizomycotina</taxon>
        <taxon>Sordariomycetes</taxon>
        <taxon>Sordariomycetidae</taxon>
        <taxon>Sordariales</taxon>
        <taxon>Sordariaceae</taxon>
        <taxon>Neurospora</taxon>
    </lineage>
</organism>